<comment type="function">
    <text evidence="6">Probable secreted effector that translocates into the nuclei of host cells to reprogram the expression of targeted genes by binding on effector binding elements in rice.</text>
</comment>
<comment type="subcellular location">
    <subcellularLocation>
        <location evidence="1">Secreted</location>
    </subcellularLocation>
    <subcellularLocation>
        <location evidence="6">Host nucleus</location>
    </subcellularLocation>
</comment>
<comment type="induction">
    <text evidence="4">Expressed during multiple stages of host plant infection, including the prepenetration, early biotrophy, late biotrophy, transition and necrotrophy.</text>
</comment>
<reference key="1">
    <citation type="journal article" date="2005" name="Nature">
        <title>The genome sequence of the rice blast fungus Magnaporthe grisea.</title>
        <authorList>
            <person name="Dean R.A."/>
            <person name="Talbot N.J."/>
            <person name="Ebbole D.J."/>
            <person name="Farman M.L."/>
            <person name="Mitchell T.K."/>
            <person name="Orbach M.J."/>
            <person name="Thon M.R."/>
            <person name="Kulkarni R."/>
            <person name="Xu J.-R."/>
            <person name="Pan H."/>
            <person name="Read N.D."/>
            <person name="Lee Y.-H."/>
            <person name="Carbone I."/>
            <person name="Brown D."/>
            <person name="Oh Y.Y."/>
            <person name="Donofrio N."/>
            <person name="Jeong J.S."/>
            <person name="Soanes D.M."/>
            <person name="Djonovic S."/>
            <person name="Kolomiets E."/>
            <person name="Rehmeyer C."/>
            <person name="Li W."/>
            <person name="Harding M."/>
            <person name="Kim S."/>
            <person name="Lebrun M.-H."/>
            <person name="Bohnert H."/>
            <person name="Coughlan S."/>
            <person name="Butler J."/>
            <person name="Calvo S.E."/>
            <person name="Ma L.-J."/>
            <person name="Nicol R."/>
            <person name="Purcell S."/>
            <person name="Nusbaum C."/>
            <person name="Galagan J.E."/>
            <person name="Birren B.W."/>
        </authorList>
    </citation>
    <scope>NUCLEOTIDE SEQUENCE [LARGE SCALE GENOMIC DNA]</scope>
    <source>
        <strain>70-15 / ATCC MYA-4617 / FGSC 8958</strain>
    </source>
</reference>
<reference key="2">
    <citation type="journal article" date="2020" name="Nat. Commun.">
        <title>Two nuclear effectors of the rice blast fungus modulate host immunity via transcriptional reprogramming.</title>
        <authorList>
            <person name="Kim S."/>
            <person name="Kim C.Y."/>
            <person name="Park S.Y."/>
            <person name="Kim K.T."/>
            <person name="Jeon J."/>
            <person name="Chung H."/>
            <person name="Choi G."/>
            <person name="Kwon S."/>
            <person name="Choi J."/>
            <person name="Jeon J."/>
            <person name="Jeon J.S."/>
            <person name="Khang C.H."/>
            <person name="Kang S."/>
            <person name="Lee Y.H."/>
        </authorList>
    </citation>
    <scope>FUNCTION</scope>
    <scope>INDUCTION</scope>
</reference>
<proteinExistence type="evidence at transcript level"/>
<dbReference type="EMBL" id="CM001231">
    <property type="protein sequence ID" value="EHA58325.1"/>
    <property type="molecule type" value="Genomic_DNA"/>
</dbReference>
<dbReference type="RefSeq" id="XP_003710937.1">
    <property type="nucleotide sequence ID" value="XM_003710889.1"/>
</dbReference>
<dbReference type="STRING" id="242507.G4MS67"/>
<dbReference type="EnsemblFungi" id="MGG_04546T0">
    <property type="protein sequence ID" value="MGG_04546T0"/>
    <property type="gene ID" value="MGG_04546"/>
</dbReference>
<dbReference type="GeneID" id="2677768"/>
<dbReference type="KEGG" id="mgr:MGG_04546"/>
<dbReference type="VEuPathDB" id="FungiDB:MGG_04546"/>
<dbReference type="HOGENOM" id="CLU_2264273_0_0_1"/>
<dbReference type="InParanoid" id="G4MS67"/>
<dbReference type="Proteomes" id="UP000009058">
    <property type="component" value="Chromosome 1"/>
</dbReference>
<dbReference type="GO" id="GO:0005576">
    <property type="term" value="C:extracellular region"/>
    <property type="evidence" value="ECO:0007669"/>
    <property type="project" value="UniProtKB-SubCell"/>
</dbReference>
<dbReference type="GO" id="GO:0042025">
    <property type="term" value="C:host cell nucleus"/>
    <property type="evidence" value="ECO:0007669"/>
    <property type="project" value="UniProtKB-SubCell"/>
</dbReference>
<dbReference type="GO" id="GO:0008270">
    <property type="term" value="F:zinc ion binding"/>
    <property type="evidence" value="ECO:0007669"/>
    <property type="project" value="UniProtKB-KW"/>
</dbReference>
<dbReference type="InterPro" id="IPR013087">
    <property type="entry name" value="Znf_C2H2_type"/>
</dbReference>
<dbReference type="PROSITE" id="PS00028">
    <property type="entry name" value="ZINC_FINGER_C2H2_1"/>
    <property type="match status" value="1"/>
</dbReference>
<sequence length="103" mass="10961">MRATTAFQVIAFLAVGAAAAPTGLVQARAVDSLAVETDDIASSAGPRADDNGAASAGLKVKRQREYWCPNQVCAKTFATQEERDHHIANTVHPTNSKRDVLLQ</sequence>
<name>HTR6_PYRO7</name>
<protein>
    <recommendedName>
        <fullName evidence="5">Host transcription reprogramming factor 6</fullName>
    </recommendedName>
    <alternativeName>
        <fullName evidence="5">Secreted nuclear effector HTR6</fullName>
    </alternativeName>
</protein>
<gene>
    <name evidence="5" type="primary">HTR6</name>
    <name type="ORF">MGG_04546</name>
</gene>
<organism>
    <name type="scientific">Pyricularia oryzae (strain 70-15 / ATCC MYA-4617 / FGSC 8958)</name>
    <name type="common">Rice blast fungus</name>
    <name type="synonym">Magnaporthe oryzae</name>
    <dbReference type="NCBI Taxonomy" id="242507"/>
    <lineage>
        <taxon>Eukaryota</taxon>
        <taxon>Fungi</taxon>
        <taxon>Dikarya</taxon>
        <taxon>Ascomycota</taxon>
        <taxon>Pezizomycotina</taxon>
        <taxon>Sordariomycetes</taxon>
        <taxon>Sordariomycetidae</taxon>
        <taxon>Magnaporthales</taxon>
        <taxon>Pyriculariaceae</taxon>
        <taxon>Pyricularia</taxon>
    </lineage>
</organism>
<feature type="signal peptide" evidence="1">
    <location>
        <begin position="1"/>
        <end position="19"/>
    </location>
</feature>
<feature type="chain" id="PRO_5003466076" description="Host transcription reprogramming factor 6">
    <location>
        <begin position="20"/>
        <end position="103"/>
    </location>
</feature>
<feature type="zinc finger region" description="C2H2-type" evidence="2">
    <location>
        <begin position="66"/>
        <end position="92"/>
    </location>
</feature>
<feature type="region of interest" description="Disordered" evidence="3">
    <location>
        <begin position="82"/>
        <end position="103"/>
    </location>
</feature>
<keyword id="KW-1048">Host nucleus</keyword>
<keyword id="KW-0479">Metal-binding</keyword>
<keyword id="KW-1185">Reference proteome</keyword>
<keyword id="KW-0964">Secreted</keyword>
<keyword id="KW-0732">Signal</keyword>
<keyword id="KW-0804">Transcription</keyword>
<keyword id="KW-0805">Transcription regulation</keyword>
<keyword id="KW-0843">Virulence</keyword>
<keyword id="KW-0862">Zinc</keyword>
<keyword id="KW-0863">Zinc-finger</keyword>
<evidence type="ECO:0000255" key="1"/>
<evidence type="ECO:0000255" key="2">
    <source>
        <dbReference type="PROSITE-ProRule" id="PRU00042"/>
    </source>
</evidence>
<evidence type="ECO:0000256" key="3">
    <source>
        <dbReference type="SAM" id="MobiDB-lite"/>
    </source>
</evidence>
<evidence type="ECO:0000269" key="4">
    <source>
    </source>
</evidence>
<evidence type="ECO:0000303" key="5">
    <source>
    </source>
</evidence>
<evidence type="ECO:0000305" key="6">
    <source>
    </source>
</evidence>
<accession>G4MS67</accession>